<proteinExistence type="inferred from homology"/>
<sequence length="241" mass="26373">MSNFAVSLPEVIAVLPAAGIGSRMLADCPKQYLTVGGKTIIEHAIFSLLHHPRIQRVIVVIHPQDTQFSRLSVAQDPRISTVYGGDQRANSVMAGLQLAGQAEWVLVHDAARPCLHLDDLSRLLSITECSQVGGILAAPVRDTMKRAEPGIQAIAHTVDRQDLWHALTPQLFPLELLKLCLSRALREGVAVTDEASALEHCGYHPILVTGRSDNIKVTRPEDLALAEFYLTQRQSLNNDSL</sequence>
<gene>
    <name evidence="1" type="primary">ispD</name>
    <name type="ordered locus">YPK_3431</name>
</gene>
<organism>
    <name type="scientific">Yersinia pseudotuberculosis serotype O:3 (strain YPIII)</name>
    <dbReference type="NCBI Taxonomy" id="502800"/>
    <lineage>
        <taxon>Bacteria</taxon>
        <taxon>Pseudomonadati</taxon>
        <taxon>Pseudomonadota</taxon>
        <taxon>Gammaproteobacteria</taxon>
        <taxon>Enterobacterales</taxon>
        <taxon>Yersiniaceae</taxon>
        <taxon>Yersinia</taxon>
    </lineage>
</organism>
<keyword id="KW-0414">Isoprene biosynthesis</keyword>
<keyword id="KW-0548">Nucleotidyltransferase</keyword>
<keyword id="KW-0808">Transferase</keyword>
<protein>
    <recommendedName>
        <fullName evidence="1">2-C-methyl-D-erythritol 4-phosphate cytidylyltransferase</fullName>
        <ecNumber evidence="1">2.7.7.60</ecNumber>
    </recommendedName>
    <alternativeName>
        <fullName evidence="1">4-diphosphocytidyl-2C-methyl-D-erythritol synthase</fullName>
    </alternativeName>
    <alternativeName>
        <fullName evidence="1">MEP cytidylyltransferase</fullName>
        <shortName evidence="1">MCT</shortName>
    </alternativeName>
</protein>
<comment type="function">
    <text evidence="1">Catalyzes the formation of 4-diphosphocytidyl-2-C-methyl-D-erythritol from CTP and 2-C-methyl-D-erythritol 4-phosphate (MEP).</text>
</comment>
<comment type="catalytic activity">
    <reaction evidence="1">
        <text>2-C-methyl-D-erythritol 4-phosphate + CTP + H(+) = 4-CDP-2-C-methyl-D-erythritol + diphosphate</text>
        <dbReference type="Rhea" id="RHEA:13429"/>
        <dbReference type="ChEBI" id="CHEBI:15378"/>
        <dbReference type="ChEBI" id="CHEBI:33019"/>
        <dbReference type="ChEBI" id="CHEBI:37563"/>
        <dbReference type="ChEBI" id="CHEBI:57823"/>
        <dbReference type="ChEBI" id="CHEBI:58262"/>
        <dbReference type="EC" id="2.7.7.60"/>
    </reaction>
</comment>
<comment type="pathway">
    <text evidence="1">Isoprenoid biosynthesis; isopentenyl diphosphate biosynthesis via DXP pathway; isopentenyl diphosphate from 1-deoxy-D-xylulose 5-phosphate: step 2/6.</text>
</comment>
<comment type="subunit">
    <text evidence="1">Homodimer.</text>
</comment>
<comment type="similarity">
    <text evidence="1">Belongs to the IspD/TarI cytidylyltransferase family. IspD subfamily.</text>
</comment>
<reference key="1">
    <citation type="submission" date="2008-02" db="EMBL/GenBank/DDBJ databases">
        <title>Complete sequence of Yersinia pseudotuberculosis YPIII.</title>
        <authorList>
            <consortium name="US DOE Joint Genome Institute"/>
            <person name="Copeland A."/>
            <person name="Lucas S."/>
            <person name="Lapidus A."/>
            <person name="Glavina del Rio T."/>
            <person name="Dalin E."/>
            <person name="Tice H."/>
            <person name="Bruce D."/>
            <person name="Goodwin L."/>
            <person name="Pitluck S."/>
            <person name="Munk A.C."/>
            <person name="Brettin T."/>
            <person name="Detter J.C."/>
            <person name="Han C."/>
            <person name="Tapia R."/>
            <person name="Schmutz J."/>
            <person name="Larimer F."/>
            <person name="Land M."/>
            <person name="Hauser L."/>
            <person name="Challacombe J.F."/>
            <person name="Green L."/>
            <person name="Lindler L.E."/>
            <person name="Nikolich M.P."/>
            <person name="Richardson P."/>
        </authorList>
    </citation>
    <scope>NUCLEOTIDE SEQUENCE [LARGE SCALE GENOMIC DNA]</scope>
    <source>
        <strain>YPIII</strain>
    </source>
</reference>
<feature type="chain" id="PRO_1000094365" description="2-C-methyl-D-erythritol 4-phosphate cytidylyltransferase">
    <location>
        <begin position="1"/>
        <end position="241"/>
    </location>
</feature>
<feature type="site" description="Transition state stabilizer" evidence="1">
    <location>
        <position position="23"/>
    </location>
</feature>
<feature type="site" description="Transition state stabilizer" evidence="1">
    <location>
        <position position="30"/>
    </location>
</feature>
<feature type="site" description="Positions MEP for the nucleophilic attack" evidence="1">
    <location>
        <position position="160"/>
    </location>
</feature>
<feature type="site" description="Positions MEP for the nucleophilic attack" evidence="1">
    <location>
        <position position="216"/>
    </location>
</feature>
<evidence type="ECO:0000255" key="1">
    <source>
        <dbReference type="HAMAP-Rule" id="MF_00108"/>
    </source>
</evidence>
<name>ISPD_YERPY</name>
<accession>B1JJF8</accession>
<dbReference type="EC" id="2.7.7.60" evidence="1"/>
<dbReference type="EMBL" id="CP000950">
    <property type="protein sequence ID" value="ACA69698.1"/>
    <property type="molecule type" value="Genomic_DNA"/>
</dbReference>
<dbReference type="RefSeq" id="WP_012105643.1">
    <property type="nucleotide sequence ID" value="NZ_CP009792.1"/>
</dbReference>
<dbReference type="SMR" id="B1JJF8"/>
<dbReference type="GeneID" id="49787222"/>
<dbReference type="KEGG" id="ypy:YPK_3431"/>
<dbReference type="PATRIC" id="fig|502800.11.peg.4169"/>
<dbReference type="UniPathway" id="UPA00056">
    <property type="reaction ID" value="UER00093"/>
</dbReference>
<dbReference type="GO" id="GO:0050518">
    <property type="term" value="F:2-C-methyl-D-erythritol 4-phosphate cytidylyltransferase activity"/>
    <property type="evidence" value="ECO:0007669"/>
    <property type="project" value="UniProtKB-UniRule"/>
</dbReference>
<dbReference type="GO" id="GO:0019288">
    <property type="term" value="P:isopentenyl diphosphate biosynthetic process, methylerythritol 4-phosphate pathway"/>
    <property type="evidence" value="ECO:0007669"/>
    <property type="project" value="UniProtKB-UniRule"/>
</dbReference>
<dbReference type="CDD" id="cd02516">
    <property type="entry name" value="CDP-ME_synthetase"/>
    <property type="match status" value="1"/>
</dbReference>
<dbReference type="FunFam" id="3.90.550.10:FF:000003">
    <property type="entry name" value="2-C-methyl-D-erythritol 4-phosphate cytidylyltransferase"/>
    <property type="match status" value="1"/>
</dbReference>
<dbReference type="Gene3D" id="3.90.550.10">
    <property type="entry name" value="Spore Coat Polysaccharide Biosynthesis Protein SpsA, Chain A"/>
    <property type="match status" value="1"/>
</dbReference>
<dbReference type="HAMAP" id="MF_00108">
    <property type="entry name" value="IspD"/>
    <property type="match status" value="1"/>
</dbReference>
<dbReference type="InterPro" id="IPR001228">
    <property type="entry name" value="IspD"/>
</dbReference>
<dbReference type="InterPro" id="IPR034683">
    <property type="entry name" value="IspD/TarI"/>
</dbReference>
<dbReference type="InterPro" id="IPR050088">
    <property type="entry name" value="IspD/TarI_cytidylyltransf_bact"/>
</dbReference>
<dbReference type="InterPro" id="IPR018294">
    <property type="entry name" value="ISPD_synthase_CS"/>
</dbReference>
<dbReference type="InterPro" id="IPR029044">
    <property type="entry name" value="Nucleotide-diphossugar_trans"/>
</dbReference>
<dbReference type="NCBIfam" id="TIGR00453">
    <property type="entry name" value="ispD"/>
    <property type="match status" value="1"/>
</dbReference>
<dbReference type="PANTHER" id="PTHR32125">
    <property type="entry name" value="2-C-METHYL-D-ERYTHRITOL 4-PHOSPHATE CYTIDYLYLTRANSFERASE, CHLOROPLASTIC"/>
    <property type="match status" value="1"/>
</dbReference>
<dbReference type="PANTHER" id="PTHR32125:SF4">
    <property type="entry name" value="2-C-METHYL-D-ERYTHRITOL 4-PHOSPHATE CYTIDYLYLTRANSFERASE, CHLOROPLASTIC"/>
    <property type="match status" value="1"/>
</dbReference>
<dbReference type="Pfam" id="PF01128">
    <property type="entry name" value="IspD"/>
    <property type="match status" value="1"/>
</dbReference>
<dbReference type="SUPFAM" id="SSF53448">
    <property type="entry name" value="Nucleotide-diphospho-sugar transferases"/>
    <property type="match status" value="1"/>
</dbReference>
<dbReference type="PROSITE" id="PS01295">
    <property type="entry name" value="ISPD"/>
    <property type="match status" value="1"/>
</dbReference>